<protein>
    <recommendedName>
        <fullName evidence="1">L-rhamnose isomerase</fullName>
        <ecNumber evidence="1">5.3.1.14</ecNumber>
    </recommendedName>
</protein>
<accession>P58507</accession>
<accession>Q0WJX9</accession>
<proteinExistence type="inferred from homology"/>
<comment type="function">
    <text evidence="1">Catalyzes the interconversion of L-rhamnose and L-rhamnulose.</text>
</comment>
<comment type="catalytic activity">
    <reaction evidence="1">
        <text>L-rhamnopyranose = L-rhamnulose</text>
        <dbReference type="Rhea" id="RHEA:23160"/>
        <dbReference type="ChEBI" id="CHEBI:17897"/>
        <dbReference type="ChEBI" id="CHEBI:62346"/>
        <dbReference type="EC" id="5.3.1.14"/>
    </reaction>
</comment>
<comment type="cofactor">
    <cofactor evidence="1">
        <name>Mn(2+)</name>
        <dbReference type="ChEBI" id="CHEBI:29035"/>
    </cofactor>
    <text evidence="1">Binds 1 Mn(2+) ion per subunit.</text>
</comment>
<comment type="pathway">
    <text evidence="1">Carbohydrate degradation; L-rhamnose degradation; glycerone phosphate from L-rhamnose: step 1/3.</text>
</comment>
<comment type="subunit">
    <text evidence="1">Homotetramer.</text>
</comment>
<comment type="subcellular location">
    <subcellularLocation>
        <location evidence="1">Cytoplasm</location>
    </subcellularLocation>
</comment>
<comment type="similarity">
    <text evidence="1">Belongs to the rhamnose isomerase family.</text>
</comment>
<comment type="sequence caution" evidence="2">
    <conflict type="erroneous initiation">
        <sequence resource="EMBL-CDS" id="AAM84174"/>
    </conflict>
</comment>
<comment type="sequence caution" evidence="2">
    <conflict type="erroneous initiation">
        <sequence resource="EMBL-CDS" id="AAS60754"/>
    </conflict>
</comment>
<dbReference type="EC" id="5.3.1.14" evidence="1"/>
<dbReference type="EMBL" id="AL590842">
    <property type="protein sequence ID" value="CAL19013.1"/>
    <property type="molecule type" value="Genomic_DNA"/>
</dbReference>
<dbReference type="EMBL" id="AE009952">
    <property type="protein sequence ID" value="AAM84174.1"/>
    <property type="status" value="ALT_INIT"/>
    <property type="molecule type" value="Genomic_DNA"/>
</dbReference>
<dbReference type="EMBL" id="AE017042">
    <property type="protein sequence ID" value="AAS60754.1"/>
    <property type="status" value="ALT_INIT"/>
    <property type="molecule type" value="Genomic_DNA"/>
</dbReference>
<dbReference type="PIR" id="AC0041">
    <property type="entry name" value="AC0041"/>
</dbReference>
<dbReference type="RefSeq" id="WP_002209104.1">
    <property type="nucleotide sequence ID" value="NZ_WUCM01000014.1"/>
</dbReference>
<dbReference type="RefSeq" id="YP_002345409.1">
    <property type="nucleotide sequence ID" value="NC_003143.1"/>
</dbReference>
<dbReference type="SMR" id="P58507"/>
<dbReference type="STRING" id="214092.YPO0329"/>
<dbReference type="PaxDb" id="214092-YPO0329"/>
<dbReference type="DNASU" id="1145533"/>
<dbReference type="EnsemblBacteria" id="AAS60754">
    <property type="protein sequence ID" value="AAS60754"/>
    <property type="gene ID" value="YP_0484"/>
</dbReference>
<dbReference type="KEGG" id="ype:YPO0329"/>
<dbReference type="KEGG" id="ypk:y0586"/>
<dbReference type="KEGG" id="ypm:YP_0484"/>
<dbReference type="PATRIC" id="fig|214092.21.peg.566"/>
<dbReference type="eggNOG" id="COG4806">
    <property type="taxonomic scope" value="Bacteria"/>
</dbReference>
<dbReference type="HOGENOM" id="CLU_052790_0_0_6"/>
<dbReference type="OMA" id="SIHCWQG"/>
<dbReference type="OrthoDB" id="9766697at2"/>
<dbReference type="UniPathway" id="UPA00541">
    <property type="reaction ID" value="UER00601"/>
</dbReference>
<dbReference type="Proteomes" id="UP000000815">
    <property type="component" value="Chromosome"/>
</dbReference>
<dbReference type="Proteomes" id="UP000001019">
    <property type="component" value="Chromosome"/>
</dbReference>
<dbReference type="Proteomes" id="UP000002490">
    <property type="component" value="Chromosome"/>
</dbReference>
<dbReference type="GO" id="GO:0005737">
    <property type="term" value="C:cytoplasm"/>
    <property type="evidence" value="ECO:0007669"/>
    <property type="project" value="UniProtKB-SubCell"/>
</dbReference>
<dbReference type="GO" id="GO:0008740">
    <property type="term" value="F:L-rhamnose isomerase activity"/>
    <property type="evidence" value="ECO:0000318"/>
    <property type="project" value="GO_Central"/>
</dbReference>
<dbReference type="GO" id="GO:0030145">
    <property type="term" value="F:manganese ion binding"/>
    <property type="evidence" value="ECO:0007669"/>
    <property type="project" value="UniProtKB-UniRule"/>
</dbReference>
<dbReference type="GO" id="GO:0019324">
    <property type="term" value="P:L-lyxose metabolic process"/>
    <property type="evidence" value="ECO:0000318"/>
    <property type="project" value="GO_Central"/>
</dbReference>
<dbReference type="GO" id="GO:0019301">
    <property type="term" value="P:rhamnose catabolic process"/>
    <property type="evidence" value="ECO:0000318"/>
    <property type="project" value="GO_Central"/>
</dbReference>
<dbReference type="FunFam" id="3.20.20.150:FF:000006">
    <property type="entry name" value="L-rhamnose isomerase"/>
    <property type="match status" value="1"/>
</dbReference>
<dbReference type="Gene3D" id="3.20.20.150">
    <property type="entry name" value="Divalent-metal-dependent TIM barrel enzymes"/>
    <property type="match status" value="1"/>
</dbReference>
<dbReference type="HAMAP" id="MF_00541">
    <property type="entry name" value="RhaA"/>
    <property type="match status" value="1"/>
</dbReference>
<dbReference type="InterPro" id="IPR050337">
    <property type="entry name" value="L-rhamnose_isomerase"/>
</dbReference>
<dbReference type="InterPro" id="IPR009308">
    <property type="entry name" value="Rhamnose_isomerase"/>
</dbReference>
<dbReference type="InterPro" id="IPR036237">
    <property type="entry name" value="Xyl_isomerase-like_sf"/>
</dbReference>
<dbReference type="NCBIfam" id="NF002203">
    <property type="entry name" value="PRK01076.1"/>
    <property type="match status" value="1"/>
</dbReference>
<dbReference type="NCBIfam" id="TIGR01748">
    <property type="entry name" value="rhaA"/>
    <property type="match status" value="1"/>
</dbReference>
<dbReference type="PANTHER" id="PTHR30268">
    <property type="entry name" value="L-RHAMNOSE ISOMERASE"/>
    <property type="match status" value="1"/>
</dbReference>
<dbReference type="PANTHER" id="PTHR30268:SF0">
    <property type="entry name" value="L-RHAMNOSE ISOMERASE"/>
    <property type="match status" value="1"/>
</dbReference>
<dbReference type="Pfam" id="PF06134">
    <property type="entry name" value="RhaA"/>
    <property type="match status" value="1"/>
</dbReference>
<dbReference type="SUPFAM" id="SSF51658">
    <property type="entry name" value="Xylose isomerase-like"/>
    <property type="match status" value="1"/>
</dbReference>
<sequence length="418" mass="47160">MTNSIEQAWDLAKQRFAAVGVDVDAALTRLDTLPVSMHCWQGDDVTGFEDPDGVLTGGIQATGNYPGKARNATELRSDLELALALIPGPKRLNLHAIYLESDTPVARNKIEPRHFSHWVAWAKKHQLGLDFNPSCFSHPLSADGFTLSHADPEIRQFWIEHCQASRRVSAYFGEQLGTPSVMNIWIPDGMKDTPIDRLAPRQRLLSALDEVISEKLNPAHHIDAVESKLFGIGAESYTVGSNEFYMGYAASRQTALCLDAGHFHPTEVISDKISSAMLYVPRLLLHVSRPVRWDSDHVVLLDDETQAIASEIIRHNLFDRVHIGLDFFDASINRIAAWVIGTRNMKKALLRALLEPTDRLRQLELRGDYTARLALLEEQKSLPWQAIWEGYCQRNDVPVDARWLDAVREYEQQILSQR</sequence>
<evidence type="ECO:0000255" key="1">
    <source>
        <dbReference type="HAMAP-Rule" id="MF_00541"/>
    </source>
</evidence>
<evidence type="ECO:0000305" key="2"/>
<reference key="1">
    <citation type="journal article" date="2001" name="Nature">
        <title>Genome sequence of Yersinia pestis, the causative agent of plague.</title>
        <authorList>
            <person name="Parkhill J."/>
            <person name="Wren B.W."/>
            <person name="Thomson N.R."/>
            <person name="Titball R.W."/>
            <person name="Holden M.T.G."/>
            <person name="Prentice M.B."/>
            <person name="Sebaihia M."/>
            <person name="James K.D."/>
            <person name="Churcher C.M."/>
            <person name="Mungall K.L."/>
            <person name="Baker S."/>
            <person name="Basham D."/>
            <person name="Bentley S.D."/>
            <person name="Brooks K."/>
            <person name="Cerdeno-Tarraga A.-M."/>
            <person name="Chillingworth T."/>
            <person name="Cronin A."/>
            <person name="Davies R.M."/>
            <person name="Davis P."/>
            <person name="Dougan G."/>
            <person name="Feltwell T."/>
            <person name="Hamlin N."/>
            <person name="Holroyd S."/>
            <person name="Jagels K."/>
            <person name="Karlyshev A.V."/>
            <person name="Leather S."/>
            <person name="Moule S."/>
            <person name="Oyston P.C.F."/>
            <person name="Quail M.A."/>
            <person name="Rutherford K.M."/>
            <person name="Simmonds M."/>
            <person name="Skelton J."/>
            <person name="Stevens K."/>
            <person name="Whitehead S."/>
            <person name="Barrell B.G."/>
        </authorList>
    </citation>
    <scope>NUCLEOTIDE SEQUENCE [LARGE SCALE GENOMIC DNA]</scope>
    <source>
        <strain>CO-92 / Biovar Orientalis</strain>
    </source>
</reference>
<reference key="2">
    <citation type="journal article" date="2002" name="J. Bacteriol.">
        <title>Genome sequence of Yersinia pestis KIM.</title>
        <authorList>
            <person name="Deng W."/>
            <person name="Burland V."/>
            <person name="Plunkett G. III"/>
            <person name="Boutin A."/>
            <person name="Mayhew G.F."/>
            <person name="Liss P."/>
            <person name="Perna N.T."/>
            <person name="Rose D.J."/>
            <person name="Mau B."/>
            <person name="Zhou S."/>
            <person name="Schwartz D.C."/>
            <person name="Fetherston J.D."/>
            <person name="Lindler L.E."/>
            <person name="Brubaker R.R."/>
            <person name="Plano G.V."/>
            <person name="Straley S.C."/>
            <person name="McDonough K.A."/>
            <person name="Nilles M.L."/>
            <person name="Matson J.S."/>
            <person name="Blattner F.R."/>
            <person name="Perry R.D."/>
        </authorList>
    </citation>
    <scope>NUCLEOTIDE SEQUENCE [LARGE SCALE GENOMIC DNA]</scope>
    <source>
        <strain>KIM10+ / Biovar Mediaevalis</strain>
    </source>
</reference>
<reference key="3">
    <citation type="journal article" date="2004" name="DNA Res.">
        <title>Complete genome sequence of Yersinia pestis strain 91001, an isolate avirulent to humans.</title>
        <authorList>
            <person name="Song Y."/>
            <person name="Tong Z."/>
            <person name="Wang J."/>
            <person name="Wang L."/>
            <person name="Guo Z."/>
            <person name="Han Y."/>
            <person name="Zhang J."/>
            <person name="Pei D."/>
            <person name="Zhou D."/>
            <person name="Qin H."/>
            <person name="Pang X."/>
            <person name="Han Y."/>
            <person name="Zhai J."/>
            <person name="Li M."/>
            <person name="Cui B."/>
            <person name="Qi Z."/>
            <person name="Jin L."/>
            <person name="Dai R."/>
            <person name="Chen F."/>
            <person name="Li S."/>
            <person name="Ye C."/>
            <person name="Du Z."/>
            <person name="Lin W."/>
            <person name="Wang J."/>
            <person name="Yu J."/>
            <person name="Yang H."/>
            <person name="Wang J."/>
            <person name="Huang P."/>
            <person name="Yang R."/>
        </authorList>
    </citation>
    <scope>NUCLEOTIDE SEQUENCE [LARGE SCALE GENOMIC DNA]</scope>
    <source>
        <strain>91001 / Biovar Mediaevalis</strain>
    </source>
</reference>
<name>RHAA_YERPE</name>
<gene>
    <name evidence="1" type="primary">rhaA</name>
    <name type="ordered locus">YPO0329</name>
    <name type="ordered locus">y0586</name>
    <name type="ordered locus">YP_0484</name>
</gene>
<feature type="chain" id="PRO_0000090568" description="L-rhamnose isomerase">
    <location>
        <begin position="1"/>
        <end position="418"/>
    </location>
</feature>
<feature type="binding site" evidence="1">
    <location>
        <position position="262"/>
    </location>
    <ligand>
        <name>Mn(2+)</name>
        <dbReference type="ChEBI" id="CHEBI:29035"/>
    </ligand>
</feature>
<feature type="binding site" evidence="1">
    <location>
        <position position="294"/>
    </location>
    <ligand>
        <name>Mn(2+)</name>
        <dbReference type="ChEBI" id="CHEBI:29035"/>
    </ligand>
</feature>
<feature type="binding site" evidence="1">
    <location>
        <position position="296"/>
    </location>
    <ligand>
        <name>Mn(2+)</name>
        <dbReference type="ChEBI" id="CHEBI:29035"/>
    </ligand>
</feature>
<organism>
    <name type="scientific">Yersinia pestis</name>
    <dbReference type="NCBI Taxonomy" id="632"/>
    <lineage>
        <taxon>Bacteria</taxon>
        <taxon>Pseudomonadati</taxon>
        <taxon>Pseudomonadota</taxon>
        <taxon>Gammaproteobacteria</taxon>
        <taxon>Enterobacterales</taxon>
        <taxon>Yersiniaceae</taxon>
        <taxon>Yersinia</taxon>
    </lineage>
</organism>
<keyword id="KW-0963">Cytoplasm</keyword>
<keyword id="KW-0413">Isomerase</keyword>
<keyword id="KW-0464">Manganese</keyword>
<keyword id="KW-0479">Metal-binding</keyword>
<keyword id="KW-1185">Reference proteome</keyword>
<keyword id="KW-0684">Rhamnose metabolism</keyword>